<name>CYSI_ECOBR</name>
<reference key="1">
    <citation type="journal article" date="2009" name="J. Mol. Biol.">
        <title>Genome sequences of Escherichia coli B strains REL606 and BL21(DE3).</title>
        <authorList>
            <person name="Jeong H."/>
            <person name="Barbe V."/>
            <person name="Lee C.H."/>
            <person name="Vallenet D."/>
            <person name="Yu D.S."/>
            <person name="Choi S.H."/>
            <person name="Couloux A."/>
            <person name="Lee S.W."/>
            <person name="Yoon S.H."/>
            <person name="Cattolico L."/>
            <person name="Hur C.G."/>
            <person name="Park H.S."/>
            <person name="Segurens B."/>
            <person name="Kim S.C."/>
            <person name="Oh T.K."/>
            <person name="Lenski R.E."/>
            <person name="Studier F.W."/>
            <person name="Daegelen P."/>
            <person name="Kim J.F."/>
        </authorList>
    </citation>
    <scope>NUCLEOTIDE SEQUENCE [LARGE SCALE GENOMIC DNA]</scope>
    <source>
        <strain>B / REL606</strain>
    </source>
</reference>
<feature type="chain" id="PRO_0000388486" description="Sulfite reductase [NADPH] hemoprotein beta-component">
    <location>
        <begin position="1"/>
        <end position="570"/>
    </location>
</feature>
<feature type="binding site" evidence="1">
    <location>
        <position position="434"/>
    </location>
    <ligand>
        <name>[4Fe-4S] cluster</name>
        <dbReference type="ChEBI" id="CHEBI:49883"/>
    </ligand>
</feature>
<feature type="binding site" evidence="1">
    <location>
        <position position="440"/>
    </location>
    <ligand>
        <name>[4Fe-4S] cluster</name>
        <dbReference type="ChEBI" id="CHEBI:49883"/>
    </ligand>
</feature>
<feature type="binding site" evidence="1">
    <location>
        <position position="479"/>
    </location>
    <ligand>
        <name>[4Fe-4S] cluster</name>
        <dbReference type="ChEBI" id="CHEBI:49883"/>
    </ligand>
</feature>
<feature type="binding site" evidence="1">
    <location>
        <position position="483"/>
    </location>
    <ligand>
        <name>[4Fe-4S] cluster</name>
        <dbReference type="ChEBI" id="CHEBI:49883"/>
    </ligand>
</feature>
<feature type="binding site" description="axial binding residue" evidence="1">
    <location>
        <position position="483"/>
    </location>
    <ligand>
        <name>siroheme</name>
        <dbReference type="ChEBI" id="CHEBI:60052"/>
    </ligand>
    <ligandPart>
        <name>Fe</name>
        <dbReference type="ChEBI" id="CHEBI:18248"/>
    </ligandPart>
</feature>
<organism>
    <name type="scientific">Escherichia coli (strain B / REL606)</name>
    <dbReference type="NCBI Taxonomy" id="413997"/>
    <lineage>
        <taxon>Bacteria</taxon>
        <taxon>Pseudomonadati</taxon>
        <taxon>Pseudomonadota</taxon>
        <taxon>Gammaproteobacteria</taxon>
        <taxon>Enterobacterales</taxon>
        <taxon>Enterobacteriaceae</taxon>
        <taxon>Escherichia</taxon>
    </lineage>
</organism>
<dbReference type="EC" id="1.8.1.2" evidence="1"/>
<dbReference type="EMBL" id="CP000819">
    <property type="protein sequence ID" value="ACT40261.1"/>
    <property type="molecule type" value="Genomic_DNA"/>
</dbReference>
<dbReference type="RefSeq" id="WP_001290699.1">
    <property type="nucleotide sequence ID" value="NC_012967.1"/>
</dbReference>
<dbReference type="SMR" id="C6UCN7"/>
<dbReference type="KEGG" id="ebr:ECB_02608"/>
<dbReference type="HOGENOM" id="CLU_001975_3_2_6"/>
<dbReference type="BioCyc" id="ECOL413997:GCQD-2830-MONOMER"/>
<dbReference type="UniPathway" id="UPA00140">
    <property type="reaction ID" value="UER00207"/>
</dbReference>
<dbReference type="GO" id="GO:0009337">
    <property type="term" value="C:sulfite reductase complex (NADPH)"/>
    <property type="evidence" value="ECO:0007669"/>
    <property type="project" value="InterPro"/>
</dbReference>
<dbReference type="GO" id="GO:0051539">
    <property type="term" value="F:4 iron, 4 sulfur cluster binding"/>
    <property type="evidence" value="ECO:0007669"/>
    <property type="project" value="UniProtKB-KW"/>
</dbReference>
<dbReference type="GO" id="GO:0020037">
    <property type="term" value="F:heme binding"/>
    <property type="evidence" value="ECO:0007669"/>
    <property type="project" value="InterPro"/>
</dbReference>
<dbReference type="GO" id="GO:0046872">
    <property type="term" value="F:metal ion binding"/>
    <property type="evidence" value="ECO:0007669"/>
    <property type="project" value="UniProtKB-KW"/>
</dbReference>
<dbReference type="GO" id="GO:0050661">
    <property type="term" value="F:NADP binding"/>
    <property type="evidence" value="ECO:0007669"/>
    <property type="project" value="InterPro"/>
</dbReference>
<dbReference type="GO" id="GO:0050311">
    <property type="term" value="F:sulfite reductase (ferredoxin) activity"/>
    <property type="evidence" value="ECO:0007669"/>
    <property type="project" value="TreeGrafter"/>
</dbReference>
<dbReference type="GO" id="GO:0004783">
    <property type="term" value="F:sulfite reductase (NADPH) activity"/>
    <property type="evidence" value="ECO:0007669"/>
    <property type="project" value="UniProtKB-UniRule"/>
</dbReference>
<dbReference type="GO" id="GO:0019344">
    <property type="term" value="P:cysteine biosynthetic process"/>
    <property type="evidence" value="ECO:0007669"/>
    <property type="project" value="UniProtKB-KW"/>
</dbReference>
<dbReference type="GO" id="GO:0070814">
    <property type="term" value="P:hydrogen sulfide biosynthetic process"/>
    <property type="evidence" value="ECO:0007669"/>
    <property type="project" value="UniProtKB-UniRule"/>
</dbReference>
<dbReference type="GO" id="GO:0000103">
    <property type="term" value="P:sulfate assimilation"/>
    <property type="evidence" value="ECO:0007669"/>
    <property type="project" value="UniProtKB-UniRule"/>
</dbReference>
<dbReference type="FunFam" id="3.30.413.10:FF:000003">
    <property type="entry name" value="Sulfite reductase [NADPH] hemoprotein beta-component"/>
    <property type="match status" value="1"/>
</dbReference>
<dbReference type="FunFam" id="3.30.413.10:FF:000004">
    <property type="entry name" value="Sulfite reductase [NADPH] hemoprotein beta-component"/>
    <property type="match status" value="1"/>
</dbReference>
<dbReference type="Gene3D" id="3.30.413.10">
    <property type="entry name" value="Sulfite Reductase Hemoprotein, domain 1"/>
    <property type="match status" value="2"/>
</dbReference>
<dbReference type="HAMAP" id="MF_01540">
    <property type="entry name" value="CysI"/>
    <property type="match status" value="1"/>
</dbReference>
<dbReference type="InterPro" id="IPR011786">
    <property type="entry name" value="CysI"/>
</dbReference>
<dbReference type="InterPro" id="IPR005117">
    <property type="entry name" value="NiRdtase/SiRdtase_haem-b_fer"/>
</dbReference>
<dbReference type="InterPro" id="IPR036136">
    <property type="entry name" value="Nit/Sulf_reduc_fer-like_dom_sf"/>
</dbReference>
<dbReference type="InterPro" id="IPR006067">
    <property type="entry name" value="NO2/SO3_Rdtase_4Fe4S_dom"/>
</dbReference>
<dbReference type="InterPro" id="IPR045169">
    <property type="entry name" value="NO2/SO3_Rdtase_4Fe4S_prot"/>
</dbReference>
<dbReference type="InterPro" id="IPR045854">
    <property type="entry name" value="NO2/SO3_Rdtase_4Fe4S_sf"/>
</dbReference>
<dbReference type="InterPro" id="IPR006066">
    <property type="entry name" value="NO2/SO3_Rdtase_FeS/sirohaem_BS"/>
</dbReference>
<dbReference type="NCBIfam" id="TIGR02041">
    <property type="entry name" value="CysI"/>
    <property type="match status" value="1"/>
</dbReference>
<dbReference type="NCBIfam" id="NF010029">
    <property type="entry name" value="PRK13504.1"/>
    <property type="match status" value="1"/>
</dbReference>
<dbReference type="PANTHER" id="PTHR11493:SF47">
    <property type="entry name" value="SULFITE REDUCTASE [NADPH] SUBUNIT BETA"/>
    <property type="match status" value="1"/>
</dbReference>
<dbReference type="PANTHER" id="PTHR11493">
    <property type="entry name" value="SULFITE REDUCTASE [NADPH] SUBUNIT BETA-RELATED"/>
    <property type="match status" value="1"/>
</dbReference>
<dbReference type="Pfam" id="PF01077">
    <property type="entry name" value="NIR_SIR"/>
    <property type="match status" value="1"/>
</dbReference>
<dbReference type="Pfam" id="PF03460">
    <property type="entry name" value="NIR_SIR_ferr"/>
    <property type="match status" value="2"/>
</dbReference>
<dbReference type="PRINTS" id="PR00397">
    <property type="entry name" value="SIROHAEM"/>
</dbReference>
<dbReference type="SUPFAM" id="SSF56014">
    <property type="entry name" value="Nitrite and sulphite reductase 4Fe-4S domain-like"/>
    <property type="match status" value="2"/>
</dbReference>
<dbReference type="SUPFAM" id="SSF55124">
    <property type="entry name" value="Nitrite/Sulfite reductase N-terminal domain-like"/>
    <property type="match status" value="2"/>
</dbReference>
<dbReference type="PROSITE" id="PS00365">
    <property type="entry name" value="NIR_SIR"/>
    <property type="match status" value="1"/>
</dbReference>
<sequence>MSEKHPGPLVVEGKLTDAERMKLESNYLRGTIAEDLNDGLTGGFKGDNFLLIRFHGMYQQDDRDIRAERAEQKLEPRHAMLLRCRLPGGVITTKQWQAIDKFAGENTIYGSIRLTNRQTFQFHGILKKNVKPVHQMLHSVGLDALATANDMNRNVLCTSNPYESQLHAEAYEWAKKISEHLLPRTRAYAEIWLDQEKVATTDEEPILGQTYLPRKFKTTVVIPPQNDIDLHANDMNFVAIAENGKLVGFNLLVGGGLSIEHGNKKTYARTASEFGYLPLEHTLAVAEAVVTTQRDWGNRTDRKNAKTKYTLERVGVETFKAEVERRAGIKFEPIRPYEFTGRGDRIGWVKGIDDNWHLTLFIENGRILDYPARPLKTGLLEIAKIHKGDFRITANQNLIIAGVPESEKAKIEKIAKESGLMNAVTPQRENSMACVSFPTCPLAMAEAERFLPSFIDNIDNLMAKHGVSDEHIVMRVTGCPNGCGRAMLAEVGLVGKAPGRYNLHLGGNRIGTRIPRMYKENITEPEILASLDELIGRWAKEREAGEGFGDFTVRAGIIRPVLDPARDLWD</sequence>
<comment type="function">
    <text evidence="1">Component of the sulfite reductase complex that catalyzes the 6-electron reduction of sulfite to sulfide. This is one of several activities required for the biosynthesis of L-cysteine from sulfate.</text>
</comment>
<comment type="catalytic activity">
    <reaction evidence="1">
        <text>hydrogen sulfide + 3 NADP(+) + 3 H2O = sulfite + 3 NADPH + 4 H(+)</text>
        <dbReference type="Rhea" id="RHEA:13801"/>
        <dbReference type="ChEBI" id="CHEBI:15377"/>
        <dbReference type="ChEBI" id="CHEBI:15378"/>
        <dbReference type="ChEBI" id="CHEBI:17359"/>
        <dbReference type="ChEBI" id="CHEBI:29919"/>
        <dbReference type="ChEBI" id="CHEBI:57783"/>
        <dbReference type="ChEBI" id="CHEBI:58349"/>
        <dbReference type="EC" id="1.8.1.2"/>
    </reaction>
</comment>
<comment type="cofactor">
    <cofactor evidence="1">
        <name>siroheme</name>
        <dbReference type="ChEBI" id="CHEBI:60052"/>
    </cofactor>
    <text evidence="1">Binds 1 siroheme per subunit.</text>
</comment>
<comment type="cofactor">
    <cofactor evidence="1">
        <name>[4Fe-4S] cluster</name>
        <dbReference type="ChEBI" id="CHEBI:49883"/>
    </cofactor>
    <text evidence="1">Binds 1 [4Fe-4S] cluster per subunit.</text>
</comment>
<comment type="pathway">
    <text evidence="1">Sulfur metabolism; hydrogen sulfide biosynthesis; hydrogen sulfide from sulfite (NADPH route): step 1/1.</text>
</comment>
<comment type="subunit">
    <text evidence="1">Alpha(8)-beta(8). The alpha component is a flavoprotein, the beta component is a hemoprotein.</text>
</comment>
<comment type="similarity">
    <text evidence="1">Belongs to the nitrite and sulfite reductase 4Fe-4S domain family.</text>
</comment>
<gene>
    <name evidence="1" type="primary">cysI</name>
    <name type="ordered locus">ECB_02608</name>
</gene>
<evidence type="ECO:0000255" key="1">
    <source>
        <dbReference type="HAMAP-Rule" id="MF_01540"/>
    </source>
</evidence>
<accession>C6UCN7</accession>
<proteinExistence type="inferred from homology"/>
<protein>
    <recommendedName>
        <fullName evidence="1">Sulfite reductase [NADPH] hemoprotein beta-component</fullName>
        <shortName evidence="1">SiR-HP</shortName>
        <shortName evidence="1">SiRHP</shortName>
        <ecNumber evidence="1">1.8.1.2</ecNumber>
    </recommendedName>
</protein>
<keyword id="KW-0004">4Fe-4S</keyword>
<keyword id="KW-0028">Amino-acid biosynthesis</keyword>
<keyword id="KW-0198">Cysteine biosynthesis</keyword>
<keyword id="KW-0349">Heme</keyword>
<keyword id="KW-0408">Iron</keyword>
<keyword id="KW-0411">Iron-sulfur</keyword>
<keyword id="KW-0479">Metal-binding</keyword>
<keyword id="KW-0521">NADP</keyword>
<keyword id="KW-0560">Oxidoreductase</keyword>